<organism>
    <name type="scientific">Arabidopsis thaliana</name>
    <name type="common">Mouse-ear cress</name>
    <dbReference type="NCBI Taxonomy" id="3702"/>
    <lineage>
        <taxon>Eukaryota</taxon>
        <taxon>Viridiplantae</taxon>
        <taxon>Streptophyta</taxon>
        <taxon>Embryophyta</taxon>
        <taxon>Tracheophyta</taxon>
        <taxon>Spermatophyta</taxon>
        <taxon>Magnoliopsida</taxon>
        <taxon>eudicotyledons</taxon>
        <taxon>Gunneridae</taxon>
        <taxon>Pentapetalae</taxon>
        <taxon>rosids</taxon>
        <taxon>malvids</taxon>
        <taxon>Brassicales</taxon>
        <taxon>Brassicaceae</taxon>
        <taxon>Camelineae</taxon>
        <taxon>Arabidopsis</taxon>
    </lineage>
</organism>
<feature type="chain" id="PRO_0000425384" description="Protein trichome birefringence-like 19">
    <location>
        <begin position="1"/>
        <end position="426"/>
    </location>
</feature>
<feature type="transmembrane region" description="Helical; Signal-anchor for type II membrane protein" evidence="3">
    <location>
        <begin position="15"/>
        <end position="35"/>
    </location>
</feature>
<feature type="short sequence motif" description="GDS motif">
    <location>
        <begin position="142"/>
        <end position="144"/>
    </location>
</feature>
<feature type="short sequence motif" description="DCXHWCLPGXXDXWN motif">
    <location>
        <begin position="388"/>
        <end position="402"/>
    </location>
</feature>
<proteinExistence type="inferred from homology"/>
<protein>
    <recommendedName>
        <fullName>Protein trichome birefringence-like 19</fullName>
    </recommendedName>
</protein>
<evidence type="ECO:0000250" key="1">
    <source>
        <dbReference type="UniProtKB" id="Q9FG35"/>
    </source>
</evidence>
<evidence type="ECO:0000250" key="2">
    <source>
        <dbReference type="UniProtKB" id="Q9LY46"/>
    </source>
</evidence>
<evidence type="ECO:0000255" key="3"/>
<evidence type="ECO:0000305" key="4"/>
<evidence type="ECO:0000305" key="5">
    <source>
    </source>
</evidence>
<dbReference type="EMBL" id="AL391145">
    <property type="protein sequence ID" value="CAC01789.1"/>
    <property type="molecule type" value="Genomic_DNA"/>
</dbReference>
<dbReference type="EMBL" id="CP002688">
    <property type="protein sequence ID" value="AED92222.1"/>
    <property type="molecule type" value="Genomic_DNA"/>
</dbReference>
<dbReference type="PIR" id="T51373">
    <property type="entry name" value="T51373"/>
</dbReference>
<dbReference type="RefSeq" id="NP_197094.1">
    <property type="nucleotide sequence ID" value="NM_121595.3"/>
</dbReference>
<dbReference type="SMR" id="Q9LFT0"/>
<dbReference type="STRING" id="3702.Q9LFT0"/>
<dbReference type="PaxDb" id="3702-AT5G15900.1"/>
<dbReference type="ProteomicsDB" id="234245"/>
<dbReference type="EnsemblPlants" id="AT5G15900.1">
    <property type="protein sequence ID" value="AT5G15900.1"/>
    <property type="gene ID" value="AT5G15900"/>
</dbReference>
<dbReference type="GeneID" id="831447"/>
<dbReference type="Gramene" id="AT5G15900.1">
    <property type="protein sequence ID" value="AT5G15900.1"/>
    <property type="gene ID" value="AT5G15900"/>
</dbReference>
<dbReference type="KEGG" id="ath:AT5G15900"/>
<dbReference type="Araport" id="AT5G15900"/>
<dbReference type="TAIR" id="AT5G15900">
    <property type="gene designation" value="TBL19"/>
</dbReference>
<dbReference type="eggNOG" id="ENOG502QR7B">
    <property type="taxonomic scope" value="Eukaryota"/>
</dbReference>
<dbReference type="HOGENOM" id="CLU_020953_6_5_1"/>
<dbReference type="InParanoid" id="Q9LFT0"/>
<dbReference type="PhylomeDB" id="Q9LFT0"/>
<dbReference type="PRO" id="PR:Q9LFT0"/>
<dbReference type="Proteomes" id="UP000006548">
    <property type="component" value="Chromosome 5"/>
</dbReference>
<dbReference type="ExpressionAtlas" id="Q9LFT0">
    <property type="expression patterns" value="baseline and differential"/>
</dbReference>
<dbReference type="GO" id="GO:0016020">
    <property type="term" value="C:membrane"/>
    <property type="evidence" value="ECO:0007669"/>
    <property type="project" value="UniProtKB-SubCell"/>
</dbReference>
<dbReference type="GO" id="GO:0016413">
    <property type="term" value="F:O-acetyltransferase activity"/>
    <property type="evidence" value="ECO:0007669"/>
    <property type="project" value="InterPro"/>
</dbReference>
<dbReference type="InterPro" id="IPR029962">
    <property type="entry name" value="TBL"/>
</dbReference>
<dbReference type="InterPro" id="IPR026057">
    <property type="entry name" value="TBL_C"/>
</dbReference>
<dbReference type="InterPro" id="IPR025846">
    <property type="entry name" value="TBL_N"/>
</dbReference>
<dbReference type="PANTHER" id="PTHR32285:SF48">
    <property type="entry name" value="PROTEIN TRICHOME BIREFRINGENCE-LIKE 19"/>
    <property type="match status" value="1"/>
</dbReference>
<dbReference type="PANTHER" id="PTHR32285">
    <property type="entry name" value="PROTEIN TRICHOME BIREFRINGENCE-LIKE 9-RELATED"/>
    <property type="match status" value="1"/>
</dbReference>
<dbReference type="Pfam" id="PF13839">
    <property type="entry name" value="PC-Esterase"/>
    <property type="match status" value="1"/>
</dbReference>
<dbReference type="Pfam" id="PF14416">
    <property type="entry name" value="PMR5N"/>
    <property type="match status" value="1"/>
</dbReference>
<reference key="1">
    <citation type="journal article" date="2000" name="Nature">
        <title>Sequence and analysis of chromosome 5 of the plant Arabidopsis thaliana.</title>
        <authorList>
            <person name="Tabata S."/>
            <person name="Kaneko T."/>
            <person name="Nakamura Y."/>
            <person name="Kotani H."/>
            <person name="Kato T."/>
            <person name="Asamizu E."/>
            <person name="Miyajima N."/>
            <person name="Sasamoto S."/>
            <person name="Kimura T."/>
            <person name="Hosouchi T."/>
            <person name="Kawashima K."/>
            <person name="Kohara M."/>
            <person name="Matsumoto M."/>
            <person name="Matsuno A."/>
            <person name="Muraki A."/>
            <person name="Nakayama S."/>
            <person name="Nakazaki N."/>
            <person name="Naruo K."/>
            <person name="Okumura S."/>
            <person name="Shinpo S."/>
            <person name="Takeuchi C."/>
            <person name="Wada T."/>
            <person name="Watanabe A."/>
            <person name="Yamada M."/>
            <person name="Yasuda M."/>
            <person name="Sato S."/>
            <person name="de la Bastide M."/>
            <person name="Huang E."/>
            <person name="Spiegel L."/>
            <person name="Gnoj L."/>
            <person name="O'Shaughnessy A."/>
            <person name="Preston R."/>
            <person name="Habermann K."/>
            <person name="Murray J."/>
            <person name="Johnson D."/>
            <person name="Rohlfing T."/>
            <person name="Nelson J."/>
            <person name="Stoneking T."/>
            <person name="Pepin K."/>
            <person name="Spieth J."/>
            <person name="Sekhon M."/>
            <person name="Armstrong J."/>
            <person name="Becker M."/>
            <person name="Belter E."/>
            <person name="Cordum H."/>
            <person name="Cordes M."/>
            <person name="Courtney L."/>
            <person name="Courtney W."/>
            <person name="Dante M."/>
            <person name="Du H."/>
            <person name="Edwards J."/>
            <person name="Fryman J."/>
            <person name="Haakensen B."/>
            <person name="Lamar E."/>
            <person name="Latreille P."/>
            <person name="Leonard S."/>
            <person name="Meyer R."/>
            <person name="Mulvaney E."/>
            <person name="Ozersky P."/>
            <person name="Riley A."/>
            <person name="Strowmatt C."/>
            <person name="Wagner-McPherson C."/>
            <person name="Wollam A."/>
            <person name="Yoakum M."/>
            <person name="Bell M."/>
            <person name="Dedhia N."/>
            <person name="Parnell L."/>
            <person name="Shah R."/>
            <person name="Rodriguez M."/>
            <person name="Hoon See L."/>
            <person name="Vil D."/>
            <person name="Baker J."/>
            <person name="Kirchoff K."/>
            <person name="Toth K."/>
            <person name="King L."/>
            <person name="Bahret A."/>
            <person name="Miller B."/>
            <person name="Marra M.A."/>
            <person name="Martienssen R."/>
            <person name="McCombie W.R."/>
            <person name="Wilson R.K."/>
            <person name="Murphy G."/>
            <person name="Bancroft I."/>
            <person name="Volckaert G."/>
            <person name="Wambutt R."/>
            <person name="Duesterhoeft A."/>
            <person name="Stiekema W."/>
            <person name="Pohl T."/>
            <person name="Entian K.-D."/>
            <person name="Terryn N."/>
            <person name="Hartley N."/>
            <person name="Bent E."/>
            <person name="Johnson S."/>
            <person name="Langham S.-A."/>
            <person name="McCullagh B."/>
            <person name="Robben J."/>
            <person name="Grymonprez B."/>
            <person name="Zimmermann W."/>
            <person name="Ramsperger U."/>
            <person name="Wedler H."/>
            <person name="Balke K."/>
            <person name="Wedler E."/>
            <person name="Peters S."/>
            <person name="van Staveren M."/>
            <person name="Dirkse W."/>
            <person name="Mooijman P."/>
            <person name="Klein Lankhorst R."/>
            <person name="Weitzenegger T."/>
            <person name="Bothe G."/>
            <person name="Rose M."/>
            <person name="Hauf J."/>
            <person name="Berneiser S."/>
            <person name="Hempel S."/>
            <person name="Feldpausch M."/>
            <person name="Lamberth S."/>
            <person name="Villarroel R."/>
            <person name="Gielen J."/>
            <person name="Ardiles W."/>
            <person name="Bents O."/>
            <person name="Lemcke K."/>
            <person name="Kolesov G."/>
            <person name="Mayer K.F.X."/>
            <person name="Rudd S."/>
            <person name="Schoof H."/>
            <person name="Schueller C."/>
            <person name="Zaccaria P."/>
            <person name="Mewes H.-W."/>
            <person name="Bevan M."/>
            <person name="Fransz P.F."/>
        </authorList>
    </citation>
    <scope>NUCLEOTIDE SEQUENCE [LARGE SCALE GENOMIC DNA]</scope>
    <source>
        <strain>cv. Columbia</strain>
    </source>
</reference>
<reference key="2">
    <citation type="journal article" date="2017" name="Plant J.">
        <title>Araport11: a complete reannotation of the Arabidopsis thaliana reference genome.</title>
        <authorList>
            <person name="Cheng C.Y."/>
            <person name="Krishnakumar V."/>
            <person name="Chan A.P."/>
            <person name="Thibaud-Nissen F."/>
            <person name="Schobel S."/>
            <person name="Town C.D."/>
        </authorList>
    </citation>
    <scope>GENOME REANNOTATION</scope>
    <source>
        <strain>cv. Columbia</strain>
    </source>
</reference>
<reference key="3">
    <citation type="journal article" date="2007" name="Plant J.">
        <title>Arabidopsis ESK1 encodes a novel regulator of freezing tolerance.</title>
        <authorList>
            <person name="Xin Z."/>
            <person name="Mandaokar A."/>
            <person name="Chen J."/>
            <person name="Last R.L."/>
            <person name="Browse J."/>
        </authorList>
    </citation>
    <scope>GENE FAMILY</scope>
    <source>
        <strain>cv. Columbia</strain>
    </source>
</reference>
<reference key="4">
    <citation type="journal article" date="2010" name="Plant Physiol.">
        <title>TRICHOME BIREFRINGENCE and its homolog AT5G01360 encode plant-specific DUF231 proteins required for cellulose biosynthesis in Arabidopsis.</title>
        <authorList>
            <person name="Bischoff V."/>
            <person name="Nita S."/>
            <person name="Neumetzler L."/>
            <person name="Schindelasch D."/>
            <person name="Urbain A."/>
            <person name="Eshed R."/>
            <person name="Persson S."/>
            <person name="Delmer D."/>
            <person name="Scheible W.R."/>
        </authorList>
    </citation>
    <scope>GENE FAMILY</scope>
    <scope>NOMENCLATURE</scope>
</reference>
<reference key="5">
    <citation type="journal article" date="2010" name="Plant Signal. Behav.">
        <title>Involvement of TBL/DUF231 proteins into cell wall biology.</title>
        <authorList>
            <person name="Bischoff V."/>
            <person name="Selbig J."/>
            <person name="Scheible W.R."/>
        </authorList>
    </citation>
    <scope>3D-STRUCTURE MODELING</scope>
</reference>
<accession>Q9LFT0</accession>
<sequence>MELVHSATFPCKQKLLIAVTIATSLLTIIPLLYPLLEDPNFFLKQQPPSQSSIINLENGVVTSHDSCDIFSGEWVPNPEAPYYTNTTCWAIHEHQNCMKFGRPDTDFIKWKWKPYGCEDGLPVFDPVRFLEIVRGKTMAFVGDSVSRNHMQSLICLLSQVEYPMDASVKNDDYFKRWTYETYNFTIAAFWTPHLVKSKEPDQTQPKHIDIFDLYLDEADESWTADIGDFDFVIISSGHWHYRPSVYYENRTITGCHYCQLPNITDLTMFYGYRKAFRTAFKAILDSESFKGVMYLRSFAPSHFEGGLWNEGGDCLRKQPYRSNETQDETTMKLHKIQLEEFWRAEEEAKKKGKRLRLLDTTQAMWLRPDGHPSRYGHIPEANVTLYNDCVHWCLPGPIDNLNDFLLAMLKREEDKGFLAQVRKMLS</sequence>
<name>TBL19_ARATH</name>
<gene>
    <name type="primary">TBL19</name>
    <name type="ordered locus">At5g15900</name>
    <name type="ORF">F1N13.40</name>
</gene>
<comment type="function">
    <text evidence="1 2">May act as a bridging protein that binds pectin and other cell wall polysaccharides. Probably involved in maintaining esterification of pectins (By similarity). May be involved in the specific O-acetylation of cell wall polymers (By similarity).</text>
</comment>
<comment type="subcellular location">
    <subcellularLocation>
        <location evidence="4">Membrane</location>
        <topology evidence="4">Single-pass type II membrane protein</topology>
    </subcellularLocation>
</comment>
<comment type="miscellaneous">
    <text evidence="5">Contains 2 motifs that are conserved in esterases, but it is unlikely that this protein belongs to the catalytically active pectin esterases.</text>
</comment>
<comment type="similarity">
    <text evidence="4">Belongs to the PC-esterase family. TBL subfamily.</text>
</comment>
<keyword id="KW-0472">Membrane</keyword>
<keyword id="KW-1185">Reference proteome</keyword>
<keyword id="KW-0735">Signal-anchor</keyword>
<keyword id="KW-0812">Transmembrane</keyword>
<keyword id="KW-1133">Transmembrane helix</keyword>